<feature type="chain" id="PRO_0000111903" description="Protein-L-isoaspartate O-methyltransferase">
    <location>
        <begin position="1"/>
        <end position="208"/>
    </location>
</feature>
<feature type="active site" evidence="1">
    <location>
        <position position="59"/>
    </location>
</feature>
<reference key="1">
    <citation type="journal article" date="2001" name="Nature">
        <title>Complete genome sequence of Salmonella enterica serovar Typhimurium LT2.</title>
        <authorList>
            <person name="McClelland M."/>
            <person name="Sanderson K.E."/>
            <person name="Spieth J."/>
            <person name="Clifton S.W."/>
            <person name="Latreille P."/>
            <person name="Courtney L."/>
            <person name="Porwollik S."/>
            <person name="Ali J."/>
            <person name="Dante M."/>
            <person name="Du F."/>
            <person name="Hou S."/>
            <person name="Layman D."/>
            <person name="Leonard S."/>
            <person name="Nguyen C."/>
            <person name="Scott K."/>
            <person name="Holmes A."/>
            <person name="Grewal N."/>
            <person name="Mulvaney E."/>
            <person name="Ryan E."/>
            <person name="Sun H."/>
            <person name="Florea L."/>
            <person name="Miller W."/>
            <person name="Stoneking T."/>
            <person name="Nhan M."/>
            <person name="Waterston R."/>
            <person name="Wilson R.K."/>
        </authorList>
    </citation>
    <scope>NUCLEOTIDE SEQUENCE [LARGE SCALE GENOMIC DNA]</scope>
    <source>
        <strain>LT2 / SGSC1412 / ATCC 700720</strain>
    </source>
</reference>
<dbReference type="EC" id="2.1.1.77" evidence="1"/>
<dbReference type="EMBL" id="AE006468">
    <property type="protein sequence ID" value="AAL21806.1"/>
    <property type="molecule type" value="Genomic_DNA"/>
</dbReference>
<dbReference type="RefSeq" id="NP_461847.1">
    <property type="nucleotide sequence ID" value="NC_003197.2"/>
</dbReference>
<dbReference type="RefSeq" id="WP_000253545.1">
    <property type="nucleotide sequence ID" value="NC_003197.2"/>
</dbReference>
<dbReference type="SMR" id="Q8ZMF9"/>
<dbReference type="STRING" id="99287.STM2926"/>
<dbReference type="PaxDb" id="99287-STM2926"/>
<dbReference type="GeneID" id="1254449"/>
<dbReference type="KEGG" id="stm:STM2926"/>
<dbReference type="PATRIC" id="fig|99287.12.peg.3080"/>
<dbReference type="HOGENOM" id="CLU_055432_2_0_6"/>
<dbReference type="OMA" id="HMHASAC"/>
<dbReference type="PhylomeDB" id="Q8ZMF9"/>
<dbReference type="BioCyc" id="SENT99287:STM2926-MONOMER"/>
<dbReference type="PHI-base" id="PHI:6187"/>
<dbReference type="Proteomes" id="UP000001014">
    <property type="component" value="Chromosome"/>
</dbReference>
<dbReference type="GO" id="GO:0005737">
    <property type="term" value="C:cytoplasm"/>
    <property type="evidence" value="ECO:0000318"/>
    <property type="project" value="GO_Central"/>
</dbReference>
<dbReference type="GO" id="GO:0004719">
    <property type="term" value="F:protein-L-isoaspartate (D-aspartate) O-methyltransferase activity"/>
    <property type="evidence" value="ECO:0000318"/>
    <property type="project" value="GO_Central"/>
</dbReference>
<dbReference type="GO" id="GO:0032259">
    <property type="term" value="P:methylation"/>
    <property type="evidence" value="ECO:0007669"/>
    <property type="project" value="UniProtKB-KW"/>
</dbReference>
<dbReference type="GO" id="GO:0036211">
    <property type="term" value="P:protein modification process"/>
    <property type="evidence" value="ECO:0007669"/>
    <property type="project" value="UniProtKB-UniRule"/>
</dbReference>
<dbReference type="GO" id="GO:0030091">
    <property type="term" value="P:protein repair"/>
    <property type="evidence" value="ECO:0007669"/>
    <property type="project" value="UniProtKB-UniRule"/>
</dbReference>
<dbReference type="CDD" id="cd02440">
    <property type="entry name" value="AdoMet_MTases"/>
    <property type="match status" value="1"/>
</dbReference>
<dbReference type="FunFam" id="3.40.50.150:FF:000010">
    <property type="entry name" value="Protein-L-isoaspartate O-methyltransferase"/>
    <property type="match status" value="1"/>
</dbReference>
<dbReference type="Gene3D" id="3.40.50.150">
    <property type="entry name" value="Vaccinia Virus protein VP39"/>
    <property type="match status" value="1"/>
</dbReference>
<dbReference type="HAMAP" id="MF_00090">
    <property type="entry name" value="PIMT"/>
    <property type="match status" value="1"/>
</dbReference>
<dbReference type="InterPro" id="IPR000682">
    <property type="entry name" value="PCMT"/>
</dbReference>
<dbReference type="InterPro" id="IPR029063">
    <property type="entry name" value="SAM-dependent_MTases_sf"/>
</dbReference>
<dbReference type="NCBIfam" id="TIGR00080">
    <property type="entry name" value="pimt"/>
    <property type="match status" value="1"/>
</dbReference>
<dbReference type="NCBIfam" id="NF001453">
    <property type="entry name" value="PRK00312.1"/>
    <property type="match status" value="1"/>
</dbReference>
<dbReference type="PANTHER" id="PTHR11579">
    <property type="entry name" value="PROTEIN-L-ISOASPARTATE O-METHYLTRANSFERASE"/>
    <property type="match status" value="1"/>
</dbReference>
<dbReference type="PANTHER" id="PTHR11579:SF0">
    <property type="entry name" value="PROTEIN-L-ISOASPARTATE(D-ASPARTATE) O-METHYLTRANSFERASE"/>
    <property type="match status" value="1"/>
</dbReference>
<dbReference type="Pfam" id="PF01135">
    <property type="entry name" value="PCMT"/>
    <property type="match status" value="1"/>
</dbReference>
<dbReference type="SUPFAM" id="SSF53335">
    <property type="entry name" value="S-adenosyl-L-methionine-dependent methyltransferases"/>
    <property type="match status" value="1"/>
</dbReference>
<dbReference type="PROSITE" id="PS01279">
    <property type="entry name" value="PCMT"/>
    <property type="match status" value="1"/>
</dbReference>
<comment type="function">
    <text evidence="1">Catalyzes the methyl esterification of L-isoaspartyl residues in peptides and proteins that result from spontaneous decomposition of normal L-aspartyl and L-asparaginyl residues. It plays a role in the repair and/or degradation of damaged proteins.</text>
</comment>
<comment type="catalytic activity">
    <reaction evidence="1">
        <text>[protein]-L-isoaspartate + S-adenosyl-L-methionine = [protein]-L-isoaspartate alpha-methyl ester + S-adenosyl-L-homocysteine</text>
        <dbReference type="Rhea" id="RHEA:12705"/>
        <dbReference type="Rhea" id="RHEA-COMP:12143"/>
        <dbReference type="Rhea" id="RHEA-COMP:12144"/>
        <dbReference type="ChEBI" id="CHEBI:57856"/>
        <dbReference type="ChEBI" id="CHEBI:59789"/>
        <dbReference type="ChEBI" id="CHEBI:90596"/>
        <dbReference type="ChEBI" id="CHEBI:90598"/>
        <dbReference type="EC" id="2.1.1.77"/>
    </reaction>
</comment>
<comment type="subcellular location">
    <subcellularLocation>
        <location evidence="1">Cytoplasm</location>
    </subcellularLocation>
</comment>
<comment type="similarity">
    <text evidence="1">Belongs to the methyltransferase superfamily. L-isoaspartyl/D-aspartyl protein methyltransferase family.</text>
</comment>
<name>PIMT_SALTY</name>
<protein>
    <recommendedName>
        <fullName evidence="1">Protein-L-isoaspartate O-methyltransferase</fullName>
        <ecNumber evidence="1">2.1.1.77</ecNumber>
    </recommendedName>
    <alternativeName>
        <fullName evidence="1">L-isoaspartyl protein carboxyl methyltransferase</fullName>
    </alternativeName>
    <alternativeName>
        <fullName evidence="1">Protein L-isoaspartyl methyltransferase</fullName>
    </alternativeName>
    <alternativeName>
        <fullName evidence="1">Protein-beta-aspartate methyltransferase</fullName>
        <shortName evidence="1">PIMT</shortName>
    </alternativeName>
</protein>
<accession>Q8ZMF9</accession>
<sequence>MVSGRVQALLEQLRAQGIRDEQVLNALAAVPREKFIDEAFEHKAWENIALPIGQGQTISQPYMVARMTELLELTPQSRVLEIGTGSGYQTAILAHLVHHVCSVERIKGLQWQARRRLKQLDLHNVSTRHGDGWQGWQARAPFDAIIVTAAPPEIPTALMAQLDEGGILVLPVGDEQQFLKRVRRRGGEFIIDTVEAVRFVPLVKGELA</sequence>
<proteinExistence type="inferred from homology"/>
<gene>
    <name evidence="1" type="primary">pcm</name>
    <name type="ordered locus">STM2926</name>
</gene>
<keyword id="KW-0963">Cytoplasm</keyword>
<keyword id="KW-0489">Methyltransferase</keyword>
<keyword id="KW-1185">Reference proteome</keyword>
<keyword id="KW-0949">S-adenosyl-L-methionine</keyword>
<keyword id="KW-0808">Transferase</keyword>
<evidence type="ECO:0000255" key="1">
    <source>
        <dbReference type="HAMAP-Rule" id="MF_00090"/>
    </source>
</evidence>
<organism>
    <name type="scientific">Salmonella typhimurium (strain LT2 / SGSC1412 / ATCC 700720)</name>
    <dbReference type="NCBI Taxonomy" id="99287"/>
    <lineage>
        <taxon>Bacteria</taxon>
        <taxon>Pseudomonadati</taxon>
        <taxon>Pseudomonadota</taxon>
        <taxon>Gammaproteobacteria</taxon>
        <taxon>Enterobacterales</taxon>
        <taxon>Enterobacteriaceae</taxon>
        <taxon>Salmonella</taxon>
    </lineage>
</organism>